<sequence>MQVSRPLTVSASPKGLSGRTRVPGDKSISHRSLMFAALASGRTYVTGLLEGEDVLRTADAMRALGATITREGADWVIEGRGVGALTEPADVLDMGNSGTAARLLSGILSSHAFNSIMTGDASLRSRPMRRVTVPLAANGSEFLTREGGRLPMAIRGTGEAKPIEYRLPVASAQVKSAILLAGLNAHGTTVVEEPVATRDHTENMLRHFGVEVDVSRIDAGGRRIALTGPVQMTARDVTVPGDPSSAAFPIVAALLVPGSDIWIEGVGLNPLRTGLFTTLIEMGASLSIENERVEGGEPVGDLHVRYSKLKGVDVPPERAPSMIDEYPVLAVACAFAEGASRLRGLEELRVKESDRLASTVALLNVNGAETEVIGDDLIVKGYHGPLGGGTVQTHMDHRLAMSAVVLGLAAQKPVNVDDTAFIETSFPGFVDLMNALGAGLTP</sequence>
<name>AROA_GLUOX</name>
<protein>
    <recommendedName>
        <fullName evidence="1">3-phosphoshikimate 1-carboxyvinyltransferase</fullName>
        <ecNumber evidence="1">2.5.1.19</ecNumber>
    </recommendedName>
    <alternativeName>
        <fullName evidence="1">5-enolpyruvylshikimate-3-phosphate synthase</fullName>
        <shortName evidence="1">EPSP synthase</shortName>
        <shortName evidence="1">EPSPS</shortName>
    </alternativeName>
</protein>
<gene>
    <name evidence="1" type="primary">aroA</name>
    <name type="ordered locus">GOX0598</name>
</gene>
<keyword id="KW-0028">Amino-acid biosynthesis</keyword>
<keyword id="KW-0057">Aromatic amino acid biosynthesis</keyword>
<keyword id="KW-0963">Cytoplasm</keyword>
<keyword id="KW-1185">Reference proteome</keyword>
<keyword id="KW-0808">Transferase</keyword>
<comment type="function">
    <text evidence="1">Catalyzes the transfer of the enolpyruvyl moiety of phosphoenolpyruvate (PEP) to the 5-hydroxyl of shikimate-3-phosphate (S3P) to produce enolpyruvyl shikimate-3-phosphate and inorganic phosphate.</text>
</comment>
<comment type="catalytic activity">
    <reaction evidence="1">
        <text>3-phosphoshikimate + phosphoenolpyruvate = 5-O-(1-carboxyvinyl)-3-phosphoshikimate + phosphate</text>
        <dbReference type="Rhea" id="RHEA:21256"/>
        <dbReference type="ChEBI" id="CHEBI:43474"/>
        <dbReference type="ChEBI" id="CHEBI:57701"/>
        <dbReference type="ChEBI" id="CHEBI:58702"/>
        <dbReference type="ChEBI" id="CHEBI:145989"/>
        <dbReference type="EC" id="2.5.1.19"/>
    </reaction>
    <physiologicalReaction direction="left-to-right" evidence="1">
        <dbReference type="Rhea" id="RHEA:21257"/>
    </physiologicalReaction>
</comment>
<comment type="pathway">
    <text evidence="1">Metabolic intermediate biosynthesis; chorismate biosynthesis; chorismate from D-erythrose 4-phosphate and phosphoenolpyruvate: step 6/7.</text>
</comment>
<comment type="subunit">
    <text evidence="1">Monomer.</text>
</comment>
<comment type="subcellular location">
    <subcellularLocation>
        <location evidence="1">Cytoplasm</location>
    </subcellularLocation>
</comment>
<comment type="similarity">
    <text evidence="1">Belongs to the EPSP synthase family.</text>
</comment>
<accession>Q5FTC0</accession>
<dbReference type="EC" id="2.5.1.19" evidence="1"/>
<dbReference type="EMBL" id="CP000009">
    <property type="protein sequence ID" value="AAW60376.1"/>
    <property type="molecule type" value="Genomic_DNA"/>
</dbReference>
<dbReference type="RefSeq" id="WP_011252175.1">
    <property type="nucleotide sequence ID" value="NC_006677.1"/>
</dbReference>
<dbReference type="SMR" id="Q5FTC0"/>
<dbReference type="STRING" id="290633.GOX0598"/>
<dbReference type="KEGG" id="gox:GOX0598"/>
<dbReference type="eggNOG" id="COG0128">
    <property type="taxonomic scope" value="Bacteria"/>
</dbReference>
<dbReference type="HOGENOM" id="CLU_024321_0_1_5"/>
<dbReference type="UniPathway" id="UPA00053">
    <property type="reaction ID" value="UER00089"/>
</dbReference>
<dbReference type="Proteomes" id="UP000006375">
    <property type="component" value="Chromosome"/>
</dbReference>
<dbReference type="GO" id="GO:0005737">
    <property type="term" value="C:cytoplasm"/>
    <property type="evidence" value="ECO:0007669"/>
    <property type="project" value="UniProtKB-SubCell"/>
</dbReference>
<dbReference type="GO" id="GO:0003866">
    <property type="term" value="F:3-phosphoshikimate 1-carboxyvinyltransferase activity"/>
    <property type="evidence" value="ECO:0007669"/>
    <property type="project" value="UniProtKB-UniRule"/>
</dbReference>
<dbReference type="GO" id="GO:0008652">
    <property type="term" value="P:amino acid biosynthetic process"/>
    <property type="evidence" value="ECO:0007669"/>
    <property type="project" value="UniProtKB-KW"/>
</dbReference>
<dbReference type="GO" id="GO:0009073">
    <property type="term" value="P:aromatic amino acid family biosynthetic process"/>
    <property type="evidence" value="ECO:0007669"/>
    <property type="project" value="UniProtKB-KW"/>
</dbReference>
<dbReference type="GO" id="GO:0009423">
    <property type="term" value="P:chorismate biosynthetic process"/>
    <property type="evidence" value="ECO:0007669"/>
    <property type="project" value="UniProtKB-UniRule"/>
</dbReference>
<dbReference type="CDD" id="cd01556">
    <property type="entry name" value="EPSP_synthase"/>
    <property type="match status" value="1"/>
</dbReference>
<dbReference type="FunFam" id="3.65.10.10:FF:000005">
    <property type="entry name" value="3-phosphoshikimate 1-carboxyvinyltransferase"/>
    <property type="match status" value="1"/>
</dbReference>
<dbReference type="FunFam" id="3.65.10.10:FF:000006">
    <property type="entry name" value="3-phosphoshikimate 1-carboxyvinyltransferase"/>
    <property type="match status" value="1"/>
</dbReference>
<dbReference type="Gene3D" id="3.65.10.10">
    <property type="entry name" value="Enolpyruvate transferase domain"/>
    <property type="match status" value="2"/>
</dbReference>
<dbReference type="HAMAP" id="MF_00210">
    <property type="entry name" value="EPSP_synth"/>
    <property type="match status" value="1"/>
</dbReference>
<dbReference type="InterPro" id="IPR001986">
    <property type="entry name" value="Enolpyruvate_Tfrase_dom"/>
</dbReference>
<dbReference type="InterPro" id="IPR036968">
    <property type="entry name" value="Enolpyruvate_Tfrase_sf"/>
</dbReference>
<dbReference type="InterPro" id="IPR006264">
    <property type="entry name" value="EPSP_synthase"/>
</dbReference>
<dbReference type="InterPro" id="IPR023193">
    <property type="entry name" value="EPSP_synthase_CS"/>
</dbReference>
<dbReference type="InterPro" id="IPR013792">
    <property type="entry name" value="RNA3'P_cycl/enolpyr_Trfase_a/b"/>
</dbReference>
<dbReference type="NCBIfam" id="TIGR01356">
    <property type="entry name" value="aroA"/>
    <property type="match status" value="1"/>
</dbReference>
<dbReference type="PANTHER" id="PTHR21090">
    <property type="entry name" value="AROM/DEHYDROQUINATE SYNTHASE"/>
    <property type="match status" value="1"/>
</dbReference>
<dbReference type="PANTHER" id="PTHR21090:SF5">
    <property type="entry name" value="PENTAFUNCTIONAL AROM POLYPEPTIDE"/>
    <property type="match status" value="1"/>
</dbReference>
<dbReference type="Pfam" id="PF00275">
    <property type="entry name" value="EPSP_synthase"/>
    <property type="match status" value="1"/>
</dbReference>
<dbReference type="PIRSF" id="PIRSF000505">
    <property type="entry name" value="EPSPS"/>
    <property type="match status" value="1"/>
</dbReference>
<dbReference type="SUPFAM" id="SSF55205">
    <property type="entry name" value="EPT/RTPC-like"/>
    <property type="match status" value="1"/>
</dbReference>
<dbReference type="PROSITE" id="PS00104">
    <property type="entry name" value="EPSP_SYNTHASE_1"/>
    <property type="match status" value="1"/>
</dbReference>
<dbReference type="PROSITE" id="PS00885">
    <property type="entry name" value="EPSP_SYNTHASE_2"/>
    <property type="match status" value="1"/>
</dbReference>
<reference key="1">
    <citation type="journal article" date="2005" name="Nat. Biotechnol.">
        <title>Complete genome sequence of the acetic acid bacterium Gluconobacter oxydans.</title>
        <authorList>
            <person name="Prust C."/>
            <person name="Hoffmeister M."/>
            <person name="Liesegang H."/>
            <person name="Wiezer A."/>
            <person name="Fricke W.F."/>
            <person name="Ehrenreich A."/>
            <person name="Gottschalk G."/>
            <person name="Deppenmeier U."/>
        </authorList>
    </citation>
    <scope>NUCLEOTIDE SEQUENCE [LARGE SCALE GENOMIC DNA]</scope>
    <source>
        <strain>621H</strain>
    </source>
</reference>
<evidence type="ECO:0000255" key="1">
    <source>
        <dbReference type="HAMAP-Rule" id="MF_00210"/>
    </source>
</evidence>
<evidence type="ECO:0000256" key="2">
    <source>
        <dbReference type="SAM" id="MobiDB-lite"/>
    </source>
</evidence>
<organism>
    <name type="scientific">Gluconobacter oxydans (strain 621H)</name>
    <name type="common">Gluconobacter suboxydans</name>
    <dbReference type="NCBI Taxonomy" id="290633"/>
    <lineage>
        <taxon>Bacteria</taxon>
        <taxon>Pseudomonadati</taxon>
        <taxon>Pseudomonadota</taxon>
        <taxon>Alphaproteobacteria</taxon>
        <taxon>Acetobacterales</taxon>
        <taxon>Acetobacteraceae</taxon>
        <taxon>Gluconobacter</taxon>
    </lineage>
</organism>
<proteinExistence type="inferred from homology"/>
<feature type="chain" id="PRO_0000325348" description="3-phosphoshikimate 1-carboxyvinyltransferase">
    <location>
        <begin position="1"/>
        <end position="442"/>
    </location>
</feature>
<feature type="region of interest" description="Disordered" evidence="2">
    <location>
        <begin position="1"/>
        <end position="25"/>
    </location>
</feature>
<feature type="compositionally biased region" description="Polar residues" evidence="2">
    <location>
        <begin position="1"/>
        <end position="11"/>
    </location>
</feature>
<feature type="active site" description="Proton acceptor" evidence="1">
    <location>
        <position position="324"/>
    </location>
</feature>
<feature type="binding site" evidence="1">
    <location>
        <position position="26"/>
    </location>
    <ligand>
        <name>3-phosphoshikimate</name>
        <dbReference type="ChEBI" id="CHEBI:145989"/>
    </ligand>
</feature>
<feature type="binding site" evidence="1">
    <location>
        <position position="26"/>
    </location>
    <ligand>
        <name>phosphoenolpyruvate</name>
        <dbReference type="ChEBI" id="CHEBI:58702"/>
    </ligand>
</feature>
<feature type="binding site" evidence="1">
    <location>
        <position position="27"/>
    </location>
    <ligand>
        <name>3-phosphoshikimate</name>
        <dbReference type="ChEBI" id="CHEBI:145989"/>
    </ligand>
</feature>
<feature type="binding site" evidence="1">
    <location>
        <position position="31"/>
    </location>
    <ligand>
        <name>3-phosphoshikimate</name>
        <dbReference type="ChEBI" id="CHEBI:145989"/>
    </ligand>
</feature>
<feature type="binding site" evidence="1">
    <location>
        <position position="98"/>
    </location>
    <ligand>
        <name>phosphoenolpyruvate</name>
        <dbReference type="ChEBI" id="CHEBI:58702"/>
    </ligand>
</feature>
<feature type="binding site" evidence="1">
    <location>
        <position position="126"/>
    </location>
    <ligand>
        <name>phosphoenolpyruvate</name>
        <dbReference type="ChEBI" id="CHEBI:58702"/>
    </ligand>
</feature>
<feature type="binding site" evidence="1">
    <location>
        <position position="171"/>
    </location>
    <ligand>
        <name>3-phosphoshikimate</name>
        <dbReference type="ChEBI" id="CHEBI:145989"/>
    </ligand>
</feature>
<feature type="binding site" evidence="1">
    <location>
        <position position="173"/>
    </location>
    <ligand>
        <name>3-phosphoshikimate</name>
        <dbReference type="ChEBI" id="CHEBI:145989"/>
    </ligand>
</feature>
<feature type="binding site" evidence="1">
    <location>
        <position position="173"/>
    </location>
    <ligand>
        <name>phosphoenolpyruvate</name>
        <dbReference type="ChEBI" id="CHEBI:58702"/>
    </ligand>
</feature>
<feature type="binding site" evidence="1">
    <location>
        <position position="324"/>
    </location>
    <ligand>
        <name>3-phosphoshikimate</name>
        <dbReference type="ChEBI" id="CHEBI:145989"/>
    </ligand>
</feature>
<feature type="binding site" evidence="1">
    <location>
        <position position="351"/>
    </location>
    <ligand>
        <name>3-phosphoshikimate</name>
        <dbReference type="ChEBI" id="CHEBI:145989"/>
    </ligand>
</feature>
<feature type="binding site" evidence="1">
    <location>
        <position position="355"/>
    </location>
    <ligand>
        <name>phosphoenolpyruvate</name>
        <dbReference type="ChEBI" id="CHEBI:58702"/>
    </ligand>
</feature>
<feature type="binding site" evidence="1">
    <location>
        <position position="398"/>
    </location>
    <ligand>
        <name>phosphoenolpyruvate</name>
        <dbReference type="ChEBI" id="CHEBI:58702"/>
    </ligand>
</feature>